<keyword id="KW-0031">Aminopeptidase</keyword>
<keyword id="KW-0963">Cytoplasm</keyword>
<keyword id="KW-0378">Hydrolase</keyword>
<keyword id="KW-0464">Manganese</keyword>
<keyword id="KW-0479">Metal-binding</keyword>
<keyword id="KW-0645">Protease</keyword>
<keyword id="KW-1185">Reference proteome</keyword>
<protein>
    <recommendedName>
        <fullName evidence="1">Probable cytosol aminopeptidase</fullName>
        <ecNumber evidence="1">3.4.11.1</ecNumber>
    </recommendedName>
    <alternativeName>
        <fullName evidence="1">Leucine aminopeptidase</fullName>
        <shortName evidence="1">LAP</shortName>
        <ecNumber evidence="1">3.4.11.10</ecNumber>
    </alternativeName>
    <alternativeName>
        <fullName evidence="1">Leucyl aminopeptidase</fullName>
    </alternativeName>
</protein>
<organism>
    <name type="scientific">Roseiflexus castenholzii (strain DSM 13941 / HLO8)</name>
    <dbReference type="NCBI Taxonomy" id="383372"/>
    <lineage>
        <taxon>Bacteria</taxon>
        <taxon>Bacillati</taxon>
        <taxon>Chloroflexota</taxon>
        <taxon>Chloroflexia</taxon>
        <taxon>Chloroflexales</taxon>
        <taxon>Roseiflexineae</taxon>
        <taxon>Roseiflexaceae</taxon>
        <taxon>Roseiflexus</taxon>
    </lineage>
</organism>
<evidence type="ECO:0000255" key="1">
    <source>
        <dbReference type="HAMAP-Rule" id="MF_00181"/>
    </source>
</evidence>
<proteinExistence type="inferred from homology"/>
<dbReference type="EC" id="3.4.11.1" evidence="1"/>
<dbReference type="EC" id="3.4.11.10" evidence="1"/>
<dbReference type="EMBL" id="CP000804">
    <property type="protein sequence ID" value="ABU56428.1"/>
    <property type="molecule type" value="Genomic_DNA"/>
</dbReference>
<dbReference type="RefSeq" id="WP_011997832.1">
    <property type="nucleotide sequence ID" value="NC_009767.1"/>
</dbReference>
<dbReference type="SMR" id="A7NG41"/>
<dbReference type="STRING" id="383372.Rcas_0295"/>
<dbReference type="MEROPS" id="M17.003"/>
<dbReference type="KEGG" id="rca:Rcas_0295"/>
<dbReference type="eggNOG" id="COG0260">
    <property type="taxonomic scope" value="Bacteria"/>
</dbReference>
<dbReference type="HOGENOM" id="CLU_013734_2_2_0"/>
<dbReference type="OrthoDB" id="9809354at2"/>
<dbReference type="Proteomes" id="UP000000263">
    <property type="component" value="Chromosome"/>
</dbReference>
<dbReference type="GO" id="GO:0005737">
    <property type="term" value="C:cytoplasm"/>
    <property type="evidence" value="ECO:0007669"/>
    <property type="project" value="UniProtKB-SubCell"/>
</dbReference>
<dbReference type="GO" id="GO:0030145">
    <property type="term" value="F:manganese ion binding"/>
    <property type="evidence" value="ECO:0007669"/>
    <property type="project" value="UniProtKB-UniRule"/>
</dbReference>
<dbReference type="GO" id="GO:0070006">
    <property type="term" value="F:metalloaminopeptidase activity"/>
    <property type="evidence" value="ECO:0007669"/>
    <property type="project" value="InterPro"/>
</dbReference>
<dbReference type="GO" id="GO:0006508">
    <property type="term" value="P:proteolysis"/>
    <property type="evidence" value="ECO:0007669"/>
    <property type="project" value="UniProtKB-KW"/>
</dbReference>
<dbReference type="CDD" id="cd00433">
    <property type="entry name" value="Peptidase_M17"/>
    <property type="match status" value="1"/>
</dbReference>
<dbReference type="Gene3D" id="3.40.220.10">
    <property type="entry name" value="Leucine Aminopeptidase, subunit E, domain 1"/>
    <property type="match status" value="1"/>
</dbReference>
<dbReference type="Gene3D" id="3.40.630.10">
    <property type="entry name" value="Zn peptidases"/>
    <property type="match status" value="1"/>
</dbReference>
<dbReference type="HAMAP" id="MF_00181">
    <property type="entry name" value="Cytosol_peptidase_M17"/>
    <property type="match status" value="1"/>
</dbReference>
<dbReference type="InterPro" id="IPR011356">
    <property type="entry name" value="Leucine_aapep/pepB"/>
</dbReference>
<dbReference type="InterPro" id="IPR043472">
    <property type="entry name" value="Macro_dom-like"/>
</dbReference>
<dbReference type="InterPro" id="IPR000819">
    <property type="entry name" value="Peptidase_M17_C"/>
</dbReference>
<dbReference type="InterPro" id="IPR023042">
    <property type="entry name" value="Peptidase_M17_leu_NH2_pept"/>
</dbReference>
<dbReference type="InterPro" id="IPR008283">
    <property type="entry name" value="Peptidase_M17_N"/>
</dbReference>
<dbReference type="NCBIfam" id="NF002073">
    <property type="entry name" value="PRK00913.1-2"/>
    <property type="match status" value="1"/>
</dbReference>
<dbReference type="NCBIfam" id="NF002074">
    <property type="entry name" value="PRK00913.1-4"/>
    <property type="match status" value="1"/>
</dbReference>
<dbReference type="NCBIfam" id="NF002077">
    <property type="entry name" value="PRK00913.2-4"/>
    <property type="match status" value="1"/>
</dbReference>
<dbReference type="NCBIfam" id="NF002083">
    <property type="entry name" value="PRK00913.3-5"/>
    <property type="match status" value="1"/>
</dbReference>
<dbReference type="PANTHER" id="PTHR11963:SF23">
    <property type="entry name" value="CYTOSOL AMINOPEPTIDASE"/>
    <property type="match status" value="1"/>
</dbReference>
<dbReference type="PANTHER" id="PTHR11963">
    <property type="entry name" value="LEUCINE AMINOPEPTIDASE-RELATED"/>
    <property type="match status" value="1"/>
</dbReference>
<dbReference type="Pfam" id="PF00883">
    <property type="entry name" value="Peptidase_M17"/>
    <property type="match status" value="1"/>
</dbReference>
<dbReference type="Pfam" id="PF02789">
    <property type="entry name" value="Peptidase_M17_N"/>
    <property type="match status" value="1"/>
</dbReference>
<dbReference type="PRINTS" id="PR00481">
    <property type="entry name" value="LAMNOPPTDASE"/>
</dbReference>
<dbReference type="SUPFAM" id="SSF52949">
    <property type="entry name" value="Macro domain-like"/>
    <property type="match status" value="1"/>
</dbReference>
<dbReference type="SUPFAM" id="SSF53187">
    <property type="entry name" value="Zn-dependent exopeptidases"/>
    <property type="match status" value="1"/>
</dbReference>
<dbReference type="PROSITE" id="PS00631">
    <property type="entry name" value="CYTOSOL_AP"/>
    <property type="match status" value="1"/>
</dbReference>
<reference key="1">
    <citation type="submission" date="2007-08" db="EMBL/GenBank/DDBJ databases">
        <title>Complete sequence of Roseiflexus castenholzii DSM 13941.</title>
        <authorList>
            <consortium name="US DOE Joint Genome Institute"/>
            <person name="Copeland A."/>
            <person name="Lucas S."/>
            <person name="Lapidus A."/>
            <person name="Barry K."/>
            <person name="Glavina del Rio T."/>
            <person name="Dalin E."/>
            <person name="Tice H."/>
            <person name="Pitluck S."/>
            <person name="Thompson L.S."/>
            <person name="Brettin T."/>
            <person name="Bruce D."/>
            <person name="Detter J.C."/>
            <person name="Han C."/>
            <person name="Tapia R."/>
            <person name="Schmutz J."/>
            <person name="Larimer F."/>
            <person name="Land M."/>
            <person name="Hauser L."/>
            <person name="Kyrpides N."/>
            <person name="Mikhailova N."/>
            <person name="Bryant D.A."/>
            <person name="Hanada S."/>
            <person name="Tsukatani Y."/>
            <person name="Richardson P."/>
        </authorList>
    </citation>
    <scope>NUCLEOTIDE SEQUENCE [LARGE SCALE GENOMIC DNA]</scope>
    <source>
        <strain>DSM 13941 / HLO8</strain>
    </source>
</reference>
<accession>A7NG41</accession>
<name>AMPA_ROSCS</name>
<sequence>MRVTVTAGDPLSTATDLLVLGLWEEESLPSPLDDLIEPGDWSGKAKQTLLIYPRGALPARRVLLIGLGKRSAPDLDQMREVAAIATQRARELKVDRFAFVIPVLSEQTPETVAAAITEGSLLGSYRFLEYKSDLKPEDRREVDELTLLAPVDAVDEAARGIARGGAVARGVNLARDLANLPPNDLTPARLAERARELAVAFDLPITVLGPAEMREQGFGGILAVGQGSVNEPRFIVIDYGAQYADAPTICLAGKGMTFDSGGISIKPAENMDAMKMDMSGAAAVLGALHAIAELRLPLHVVALIGAAENMPGGSAYRPGDILKTLSGKMIEVLNTDAEGRIVLADVLTYAQRYHPSAIIDLATLTGAISVALGPHAIGLFANDDALAQRLVRAGEAAGERAWQLPLWQPYREMVKSEIADVRNATGRQAGAITAAAFLNAFVGDYPWAHLDIAGTAWTDSKPKAYQPKGATGVGVRLLLQALRDWTQA</sequence>
<comment type="function">
    <text evidence="1">Presumably involved in the processing and regular turnover of intracellular proteins. Catalyzes the removal of unsubstituted N-terminal amino acids from various peptides.</text>
</comment>
<comment type="catalytic activity">
    <reaction evidence="1">
        <text>Release of an N-terminal amino acid, Xaa-|-Yaa-, in which Xaa is preferably Leu, but may be other amino acids including Pro although not Arg or Lys, and Yaa may be Pro. Amino acid amides and methyl esters are also readily hydrolyzed, but rates on arylamides are exceedingly low.</text>
        <dbReference type="EC" id="3.4.11.1"/>
    </reaction>
</comment>
<comment type="catalytic activity">
    <reaction evidence="1">
        <text>Release of an N-terminal amino acid, preferentially leucine, but not glutamic or aspartic acids.</text>
        <dbReference type="EC" id="3.4.11.10"/>
    </reaction>
</comment>
<comment type="cofactor">
    <cofactor evidence="1">
        <name>Mn(2+)</name>
        <dbReference type="ChEBI" id="CHEBI:29035"/>
    </cofactor>
    <text evidence="1">Binds 2 manganese ions per subunit.</text>
</comment>
<comment type="subcellular location">
    <subcellularLocation>
        <location evidence="1">Cytoplasm</location>
    </subcellularLocation>
</comment>
<comment type="similarity">
    <text evidence="1">Belongs to the peptidase M17 family.</text>
</comment>
<feature type="chain" id="PRO_1000077281" description="Probable cytosol aminopeptidase">
    <location>
        <begin position="1"/>
        <end position="488"/>
    </location>
</feature>
<feature type="active site" evidence="1">
    <location>
        <position position="266"/>
    </location>
</feature>
<feature type="active site" evidence="1">
    <location>
        <position position="340"/>
    </location>
</feature>
<feature type="binding site" evidence="1">
    <location>
        <position position="254"/>
    </location>
    <ligand>
        <name>Mn(2+)</name>
        <dbReference type="ChEBI" id="CHEBI:29035"/>
        <label>2</label>
    </ligand>
</feature>
<feature type="binding site" evidence="1">
    <location>
        <position position="259"/>
    </location>
    <ligand>
        <name>Mn(2+)</name>
        <dbReference type="ChEBI" id="CHEBI:29035"/>
        <label>1</label>
    </ligand>
</feature>
<feature type="binding site" evidence="1">
    <location>
        <position position="259"/>
    </location>
    <ligand>
        <name>Mn(2+)</name>
        <dbReference type="ChEBI" id="CHEBI:29035"/>
        <label>2</label>
    </ligand>
</feature>
<feature type="binding site" evidence="1">
    <location>
        <position position="277"/>
    </location>
    <ligand>
        <name>Mn(2+)</name>
        <dbReference type="ChEBI" id="CHEBI:29035"/>
        <label>2</label>
    </ligand>
</feature>
<feature type="binding site" evidence="1">
    <location>
        <position position="336"/>
    </location>
    <ligand>
        <name>Mn(2+)</name>
        <dbReference type="ChEBI" id="CHEBI:29035"/>
        <label>1</label>
    </ligand>
</feature>
<feature type="binding site" evidence="1">
    <location>
        <position position="338"/>
    </location>
    <ligand>
        <name>Mn(2+)</name>
        <dbReference type="ChEBI" id="CHEBI:29035"/>
        <label>1</label>
    </ligand>
</feature>
<feature type="binding site" evidence="1">
    <location>
        <position position="338"/>
    </location>
    <ligand>
        <name>Mn(2+)</name>
        <dbReference type="ChEBI" id="CHEBI:29035"/>
        <label>2</label>
    </ligand>
</feature>
<gene>
    <name evidence="1" type="primary">pepA</name>
    <name type="ordered locus">Rcas_0295</name>
</gene>